<comment type="catalytic activity">
    <reaction evidence="1">
        <text>thymidine + phosphate = 2-deoxy-alpha-D-ribose 1-phosphate + thymine</text>
        <dbReference type="Rhea" id="RHEA:16037"/>
        <dbReference type="ChEBI" id="CHEBI:17748"/>
        <dbReference type="ChEBI" id="CHEBI:17821"/>
        <dbReference type="ChEBI" id="CHEBI:43474"/>
        <dbReference type="ChEBI" id="CHEBI:57259"/>
        <dbReference type="EC" id="2.4.2.4"/>
    </reaction>
</comment>
<comment type="similarity">
    <text evidence="1">Belongs to the thymidine/pyrimidine-nucleoside phosphorylase family. Type 2 subfamily.</text>
</comment>
<comment type="sequence caution" evidence="2">
    <conflict type="erroneous initiation">
        <sequence resource="EMBL-CDS" id="ABQ35181"/>
    </conflict>
</comment>
<keyword id="KW-0328">Glycosyltransferase</keyword>
<keyword id="KW-1185">Reference proteome</keyword>
<keyword id="KW-0808">Transferase</keyword>
<gene>
    <name type="ordered locus">BBta_3062</name>
</gene>
<name>TYPH_BRASB</name>
<accession>A5EG87</accession>
<dbReference type="EC" id="2.4.2.4" evidence="1"/>
<dbReference type="EMBL" id="CP000494">
    <property type="protein sequence ID" value="ABQ35181.1"/>
    <property type="status" value="ALT_INIT"/>
    <property type="molecule type" value="Genomic_DNA"/>
</dbReference>
<dbReference type="RefSeq" id="WP_083780785.1">
    <property type="nucleotide sequence ID" value="NC_009485.1"/>
</dbReference>
<dbReference type="SMR" id="A5EG87"/>
<dbReference type="STRING" id="288000.BBta_3062"/>
<dbReference type="KEGG" id="bbt:BBta_3062"/>
<dbReference type="eggNOG" id="COG0213">
    <property type="taxonomic scope" value="Bacteria"/>
</dbReference>
<dbReference type="HOGENOM" id="CLU_025040_6_0_5"/>
<dbReference type="OrthoDB" id="341217at2"/>
<dbReference type="Proteomes" id="UP000000246">
    <property type="component" value="Chromosome"/>
</dbReference>
<dbReference type="GO" id="GO:0005829">
    <property type="term" value="C:cytosol"/>
    <property type="evidence" value="ECO:0007669"/>
    <property type="project" value="TreeGrafter"/>
</dbReference>
<dbReference type="GO" id="GO:0004645">
    <property type="term" value="F:1,4-alpha-oligoglucan phosphorylase activity"/>
    <property type="evidence" value="ECO:0007669"/>
    <property type="project" value="InterPro"/>
</dbReference>
<dbReference type="GO" id="GO:0009032">
    <property type="term" value="F:thymidine phosphorylase activity"/>
    <property type="evidence" value="ECO:0007669"/>
    <property type="project" value="UniProtKB-UniRule"/>
</dbReference>
<dbReference type="GO" id="GO:0006206">
    <property type="term" value="P:pyrimidine nucleobase metabolic process"/>
    <property type="evidence" value="ECO:0007669"/>
    <property type="project" value="InterPro"/>
</dbReference>
<dbReference type="GO" id="GO:0006213">
    <property type="term" value="P:pyrimidine nucleoside metabolic process"/>
    <property type="evidence" value="ECO:0007669"/>
    <property type="project" value="InterPro"/>
</dbReference>
<dbReference type="Gene3D" id="1.20.970.50">
    <property type="match status" value="1"/>
</dbReference>
<dbReference type="Gene3D" id="3.40.1030.10">
    <property type="entry name" value="Nucleoside phosphorylase/phosphoribosyltransferase catalytic domain"/>
    <property type="match status" value="1"/>
</dbReference>
<dbReference type="Gene3D" id="3.90.1170.30">
    <property type="entry name" value="Pyrimidine nucleoside phosphorylase-like, C-terminal domain"/>
    <property type="match status" value="1"/>
</dbReference>
<dbReference type="HAMAP" id="MF_00703">
    <property type="entry name" value="Thymid_phosp_2"/>
    <property type="match status" value="1"/>
</dbReference>
<dbReference type="InterPro" id="IPR000312">
    <property type="entry name" value="Glycosyl_Trfase_fam3"/>
</dbReference>
<dbReference type="InterPro" id="IPR017459">
    <property type="entry name" value="Glycosyl_Trfase_fam3_N_dom"/>
</dbReference>
<dbReference type="InterPro" id="IPR036320">
    <property type="entry name" value="Glycosyl_Trfase_fam3_N_dom_sf"/>
</dbReference>
<dbReference type="InterPro" id="IPR035902">
    <property type="entry name" value="Nuc_phospho_transferase"/>
</dbReference>
<dbReference type="InterPro" id="IPR036566">
    <property type="entry name" value="PYNP-like_C_sf"/>
</dbReference>
<dbReference type="InterPro" id="IPR013102">
    <property type="entry name" value="PYNP_C"/>
</dbReference>
<dbReference type="InterPro" id="IPR017872">
    <property type="entry name" value="Pyrmidine_PPase_CS"/>
</dbReference>
<dbReference type="InterPro" id="IPR028579">
    <property type="entry name" value="Thym_Pase_Put"/>
</dbReference>
<dbReference type="InterPro" id="IPR013466">
    <property type="entry name" value="Thymidine/AMP_Pase"/>
</dbReference>
<dbReference type="InterPro" id="IPR000053">
    <property type="entry name" value="Thymidine/pyrmidine_PPase"/>
</dbReference>
<dbReference type="NCBIfam" id="TIGR02645">
    <property type="entry name" value="ARCH_P_rylase"/>
    <property type="match status" value="1"/>
</dbReference>
<dbReference type="NCBIfam" id="NF003338">
    <property type="entry name" value="PRK04350.1"/>
    <property type="match status" value="1"/>
</dbReference>
<dbReference type="PANTHER" id="PTHR10515">
    <property type="entry name" value="THYMIDINE PHOSPHORYLASE"/>
    <property type="match status" value="1"/>
</dbReference>
<dbReference type="PANTHER" id="PTHR10515:SF0">
    <property type="entry name" value="THYMIDINE PHOSPHORYLASE"/>
    <property type="match status" value="1"/>
</dbReference>
<dbReference type="Pfam" id="PF02885">
    <property type="entry name" value="Glycos_trans_3N"/>
    <property type="match status" value="1"/>
</dbReference>
<dbReference type="Pfam" id="PF00591">
    <property type="entry name" value="Glycos_transf_3"/>
    <property type="match status" value="1"/>
</dbReference>
<dbReference type="Pfam" id="PF07831">
    <property type="entry name" value="PYNP_C"/>
    <property type="match status" value="1"/>
</dbReference>
<dbReference type="SMART" id="SM00941">
    <property type="entry name" value="PYNP_C"/>
    <property type="match status" value="1"/>
</dbReference>
<dbReference type="SUPFAM" id="SSF52418">
    <property type="entry name" value="Nucleoside phosphorylase/phosphoribosyltransferase catalytic domain"/>
    <property type="match status" value="1"/>
</dbReference>
<dbReference type="SUPFAM" id="SSF47648">
    <property type="entry name" value="Nucleoside phosphorylase/phosphoribosyltransferase N-terminal domain"/>
    <property type="match status" value="1"/>
</dbReference>
<dbReference type="SUPFAM" id="SSF54680">
    <property type="entry name" value="Pyrimidine nucleoside phosphorylase C-terminal domain"/>
    <property type="match status" value="1"/>
</dbReference>
<dbReference type="PROSITE" id="PS00647">
    <property type="entry name" value="THYMID_PHOSPHORYLASE"/>
    <property type="match status" value="1"/>
</dbReference>
<sequence>MSTIDSARPQLKIRSVALDTGRENVVVISRRSRALRPEVFSGFSRVELRCNSRTLLATLLITDDDALVGPDEIGLSQPALRRFAEPAGTFATVSPATPPDSLEAVRAKIRGETLSDQAISAVIDDLAHYRYSDMEIAAFLIGSASFMTSGELLALTRAMANAGTQLKWPEPVVVDKHCIGGIPGNRTSMVVVPIVAAHGLTIPKTSSRAITSPAGTADTMEVLARVNVGAEEMKSIVAACNGCVIWGGHVNLSPADDILISVERPLSLDTREQMVASILSKKLAAGSTHLLLDLPVGPTAKLSSGAEAMRLRKLFEFVGDRFGLNVEVITTDGRQPIGNGIGPVLEARDVMAVLGNEPGAPADLREKSLRLAAHLLEYDPKLRGGAGYQRARELLDSGAALKQMQKIIDAQGPTTSRNELGDLAFDVKAGRDGIVSAIDCLRLNRLARTAGAPINKGAGIRLFKKIGDRVDQGEPLYRVFTCDPSEHDLAVAAAAADHGYGFADEPNGHQR</sequence>
<feature type="chain" id="PRO_0000314697" description="Putative thymidine phosphorylase">
    <location>
        <begin position="1"/>
        <end position="511"/>
    </location>
</feature>
<protein>
    <recommendedName>
        <fullName evidence="1">Putative thymidine phosphorylase</fullName>
        <ecNumber evidence="1">2.4.2.4</ecNumber>
    </recommendedName>
    <alternativeName>
        <fullName evidence="1">TdRPase</fullName>
    </alternativeName>
</protein>
<evidence type="ECO:0000255" key="1">
    <source>
        <dbReference type="HAMAP-Rule" id="MF_00703"/>
    </source>
</evidence>
<evidence type="ECO:0000305" key="2"/>
<proteinExistence type="inferred from homology"/>
<organism>
    <name type="scientific">Bradyrhizobium sp. (strain BTAi1 / ATCC BAA-1182)</name>
    <dbReference type="NCBI Taxonomy" id="288000"/>
    <lineage>
        <taxon>Bacteria</taxon>
        <taxon>Pseudomonadati</taxon>
        <taxon>Pseudomonadota</taxon>
        <taxon>Alphaproteobacteria</taxon>
        <taxon>Hyphomicrobiales</taxon>
        <taxon>Nitrobacteraceae</taxon>
        <taxon>Bradyrhizobium</taxon>
    </lineage>
</organism>
<reference key="1">
    <citation type="journal article" date="2007" name="Science">
        <title>Legumes symbioses: absence of nod genes in photosynthetic bradyrhizobia.</title>
        <authorList>
            <person name="Giraud E."/>
            <person name="Moulin L."/>
            <person name="Vallenet D."/>
            <person name="Barbe V."/>
            <person name="Cytryn E."/>
            <person name="Avarre J.-C."/>
            <person name="Jaubert M."/>
            <person name="Simon D."/>
            <person name="Cartieaux F."/>
            <person name="Prin Y."/>
            <person name="Bena G."/>
            <person name="Hannibal L."/>
            <person name="Fardoux J."/>
            <person name="Kojadinovic M."/>
            <person name="Vuillet L."/>
            <person name="Lajus A."/>
            <person name="Cruveiller S."/>
            <person name="Rouy Z."/>
            <person name="Mangenot S."/>
            <person name="Segurens B."/>
            <person name="Dossat C."/>
            <person name="Franck W.L."/>
            <person name="Chang W.-S."/>
            <person name="Saunders E."/>
            <person name="Bruce D."/>
            <person name="Richardson P."/>
            <person name="Normand P."/>
            <person name="Dreyfus B."/>
            <person name="Pignol D."/>
            <person name="Stacey G."/>
            <person name="Emerich D."/>
            <person name="Vermeglio A."/>
            <person name="Medigue C."/>
            <person name="Sadowsky M."/>
        </authorList>
    </citation>
    <scope>NUCLEOTIDE SEQUENCE [LARGE SCALE GENOMIC DNA]</scope>
    <source>
        <strain>BTAi1 / ATCC BAA-1182</strain>
    </source>
</reference>